<reference key="1">
    <citation type="journal article" date="2001" name="Nature">
        <title>Massive gene decay in the leprosy bacillus.</title>
        <authorList>
            <person name="Cole S.T."/>
            <person name="Eiglmeier K."/>
            <person name="Parkhill J."/>
            <person name="James K.D."/>
            <person name="Thomson N.R."/>
            <person name="Wheeler P.R."/>
            <person name="Honore N."/>
            <person name="Garnier T."/>
            <person name="Churcher C.M."/>
            <person name="Harris D.E."/>
            <person name="Mungall K.L."/>
            <person name="Basham D."/>
            <person name="Brown D."/>
            <person name="Chillingworth T."/>
            <person name="Connor R."/>
            <person name="Davies R.M."/>
            <person name="Devlin K."/>
            <person name="Duthoy S."/>
            <person name="Feltwell T."/>
            <person name="Fraser A."/>
            <person name="Hamlin N."/>
            <person name="Holroyd S."/>
            <person name="Hornsby T."/>
            <person name="Jagels K."/>
            <person name="Lacroix C."/>
            <person name="Maclean J."/>
            <person name="Moule S."/>
            <person name="Murphy L.D."/>
            <person name="Oliver K."/>
            <person name="Quail M.A."/>
            <person name="Rajandream M.A."/>
            <person name="Rutherford K.M."/>
            <person name="Rutter S."/>
            <person name="Seeger K."/>
            <person name="Simon S."/>
            <person name="Simmonds M."/>
            <person name="Skelton J."/>
            <person name="Squares R."/>
            <person name="Squares S."/>
            <person name="Stevens K."/>
            <person name="Taylor K."/>
            <person name="Whitehead S."/>
            <person name="Woodward J.R."/>
            <person name="Barrell B.G."/>
        </authorList>
    </citation>
    <scope>NUCLEOTIDE SEQUENCE [LARGE SCALE GENOMIC DNA]</scope>
    <source>
        <strain>TN</strain>
    </source>
</reference>
<name>THIE_MYCLE</name>
<keyword id="KW-0460">Magnesium</keyword>
<keyword id="KW-0479">Metal-binding</keyword>
<keyword id="KW-1185">Reference proteome</keyword>
<keyword id="KW-0784">Thiamine biosynthesis</keyword>
<keyword id="KW-0808">Transferase</keyword>
<evidence type="ECO:0000255" key="1">
    <source>
        <dbReference type="HAMAP-Rule" id="MF_00097"/>
    </source>
</evidence>
<organism>
    <name type="scientific">Mycobacterium leprae (strain TN)</name>
    <dbReference type="NCBI Taxonomy" id="272631"/>
    <lineage>
        <taxon>Bacteria</taxon>
        <taxon>Bacillati</taxon>
        <taxon>Actinomycetota</taxon>
        <taxon>Actinomycetes</taxon>
        <taxon>Mycobacteriales</taxon>
        <taxon>Mycobacteriaceae</taxon>
        <taxon>Mycobacterium</taxon>
    </lineage>
</organism>
<comment type="function">
    <text evidence="1">Condenses 4-methyl-5-(beta-hydroxyethyl)thiazole monophosphate (THZ-P) and 2-methyl-4-amino-5-hydroxymethyl pyrimidine pyrophosphate (HMP-PP) to form thiamine monophosphate (TMP).</text>
</comment>
<comment type="catalytic activity">
    <reaction evidence="1">
        <text>2-[(2R,5Z)-2-carboxy-4-methylthiazol-5(2H)-ylidene]ethyl phosphate + 4-amino-2-methyl-5-(diphosphooxymethyl)pyrimidine + 2 H(+) = thiamine phosphate + CO2 + diphosphate</text>
        <dbReference type="Rhea" id="RHEA:47844"/>
        <dbReference type="ChEBI" id="CHEBI:15378"/>
        <dbReference type="ChEBI" id="CHEBI:16526"/>
        <dbReference type="ChEBI" id="CHEBI:33019"/>
        <dbReference type="ChEBI" id="CHEBI:37575"/>
        <dbReference type="ChEBI" id="CHEBI:57841"/>
        <dbReference type="ChEBI" id="CHEBI:62899"/>
        <dbReference type="EC" id="2.5.1.3"/>
    </reaction>
</comment>
<comment type="catalytic activity">
    <reaction evidence="1">
        <text>2-(2-carboxy-4-methylthiazol-5-yl)ethyl phosphate + 4-amino-2-methyl-5-(diphosphooxymethyl)pyrimidine + 2 H(+) = thiamine phosphate + CO2 + diphosphate</text>
        <dbReference type="Rhea" id="RHEA:47848"/>
        <dbReference type="ChEBI" id="CHEBI:15378"/>
        <dbReference type="ChEBI" id="CHEBI:16526"/>
        <dbReference type="ChEBI" id="CHEBI:33019"/>
        <dbReference type="ChEBI" id="CHEBI:37575"/>
        <dbReference type="ChEBI" id="CHEBI:57841"/>
        <dbReference type="ChEBI" id="CHEBI:62890"/>
        <dbReference type="EC" id="2.5.1.3"/>
    </reaction>
</comment>
<comment type="catalytic activity">
    <reaction evidence="1">
        <text>4-methyl-5-(2-phosphooxyethyl)-thiazole + 4-amino-2-methyl-5-(diphosphooxymethyl)pyrimidine + H(+) = thiamine phosphate + diphosphate</text>
        <dbReference type="Rhea" id="RHEA:22328"/>
        <dbReference type="ChEBI" id="CHEBI:15378"/>
        <dbReference type="ChEBI" id="CHEBI:33019"/>
        <dbReference type="ChEBI" id="CHEBI:37575"/>
        <dbReference type="ChEBI" id="CHEBI:57841"/>
        <dbReference type="ChEBI" id="CHEBI:58296"/>
        <dbReference type="EC" id="2.5.1.3"/>
    </reaction>
</comment>
<comment type="cofactor">
    <cofactor evidence="1">
        <name>Mg(2+)</name>
        <dbReference type="ChEBI" id="CHEBI:18420"/>
    </cofactor>
    <text evidence="1">Binds 1 Mg(2+) ion per subunit.</text>
</comment>
<comment type="pathway">
    <text evidence="1">Cofactor biosynthesis; thiamine diphosphate biosynthesis; thiamine phosphate from 4-amino-2-methyl-5-diphosphomethylpyrimidine and 4-methyl-5-(2-phosphoethyl)-thiazole: step 1/1.</text>
</comment>
<comment type="similarity">
    <text evidence="1">Belongs to the thiamine-phosphate synthase family.</text>
</comment>
<feature type="chain" id="PRO_0000157024" description="Thiamine-phosphate synthase">
    <location>
        <begin position="1"/>
        <end position="235"/>
    </location>
</feature>
<feature type="binding site" evidence="1">
    <location>
        <begin position="50"/>
        <end position="54"/>
    </location>
    <ligand>
        <name>4-amino-2-methyl-5-(diphosphooxymethyl)pyrimidine</name>
        <dbReference type="ChEBI" id="CHEBI:57841"/>
    </ligand>
</feature>
<feature type="binding site" evidence="1">
    <location>
        <position position="91"/>
    </location>
    <ligand>
        <name>4-amino-2-methyl-5-(diphosphooxymethyl)pyrimidine</name>
        <dbReference type="ChEBI" id="CHEBI:57841"/>
    </ligand>
</feature>
<feature type="binding site" evidence="1">
    <location>
        <position position="92"/>
    </location>
    <ligand>
        <name>Mg(2+)</name>
        <dbReference type="ChEBI" id="CHEBI:18420"/>
    </ligand>
</feature>
<feature type="binding site" evidence="1">
    <location>
        <position position="111"/>
    </location>
    <ligand>
        <name>Mg(2+)</name>
        <dbReference type="ChEBI" id="CHEBI:18420"/>
    </ligand>
</feature>
<feature type="binding site" evidence="1">
    <location>
        <position position="130"/>
    </location>
    <ligand>
        <name>4-amino-2-methyl-5-(diphosphooxymethyl)pyrimidine</name>
        <dbReference type="ChEBI" id="CHEBI:57841"/>
    </ligand>
</feature>
<feature type="binding site" evidence="1">
    <location>
        <begin position="160"/>
        <end position="162"/>
    </location>
    <ligand>
        <name>2-[(2R,5Z)-2-carboxy-4-methylthiazol-5(2H)-ylidene]ethyl phosphate</name>
        <dbReference type="ChEBI" id="CHEBI:62899"/>
    </ligand>
</feature>
<feature type="binding site" evidence="1">
    <location>
        <position position="163"/>
    </location>
    <ligand>
        <name>4-amino-2-methyl-5-(diphosphooxymethyl)pyrimidine</name>
        <dbReference type="ChEBI" id="CHEBI:57841"/>
    </ligand>
</feature>
<feature type="binding site" evidence="1">
    <location>
        <position position="191"/>
    </location>
    <ligand>
        <name>2-[(2R,5Z)-2-carboxy-4-methylthiazol-5(2H)-ylidene]ethyl phosphate</name>
        <dbReference type="ChEBI" id="CHEBI:62899"/>
    </ligand>
</feature>
<protein>
    <recommendedName>
        <fullName evidence="1">Thiamine-phosphate synthase</fullName>
        <shortName evidence="1">TP synthase</shortName>
        <shortName evidence="1">TPS</shortName>
        <ecNumber evidence="1">2.5.1.3</ecNumber>
    </recommendedName>
    <alternativeName>
        <fullName evidence="1">Thiamine-phosphate pyrophosphorylase</fullName>
        <shortName evidence="1">TMP pyrophosphorylase</shortName>
        <shortName evidence="1">TMP-PPase</shortName>
    </alternativeName>
</protein>
<gene>
    <name evidence="1" type="primary">thiE</name>
    <name type="ordered locus">ML0300</name>
    <name type="ORF">MLCB1450.23c</name>
</gene>
<dbReference type="EC" id="2.5.1.3" evidence="1"/>
<dbReference type="EMBL" id="AL035159">
    <property type="protein sequence ID" value="CAA22707.1"/>
    <property type="molecule type" value="Genomic_DNA"/>
</dbReference>
<dbReference type="EMBL" id="AL583918">
    <property type="protein sequence ID" value="CAC29808.1"/>
    <property type="molecule type" value="Genomic_DNA"/>
</dbReference>
<dbReference type="PIR" id="T44738">
    <property type="entry name" value="T44738"/>
</dbReference>
<dbReference type="RefSeq" id="NP_301336.1">
    <property type="nucleotide sequence ID" value="NC_002677.1"/>
</dbReference>
<dbReference type="RefSeq" id="WP_010907660.1">
    <property type="nucleotide sequence ID" value="NC_002677.1"/>
</dbReference>
<dbReference type="SMR" id="Q9ZBL5"/>
<dbReference type="STRING" id="272631.gene:17574119"/>
<dbReference type="KEGG" id="mle:ML0300"/>
<dbReference type="PATRIC" id="fig|272631.5.peg.467"/>
<dbReference type="Leproma" id="ML0300"/>
<dbReference type="eggNOG" id="COG0352">
    <property type="taxonomic scope" value="Bacteria"/>
</dbReference>
<dbReference type="HOGENOM" id="CLU_018272_3_0_11"/>
<dbReference type="OrthoDB" id="3243336at2"/>
<dbReference type="UniPathway" id="UPA00060">
    <property type="reaction ID" value="UER00141"/>
</dbReference>
<dbReference type="Proteomes" id="UP000000806">
    <property type="component" value="Chromosome"/>
</dbReference>
<dbReference type="GO" id="GO:0005737">
    <property type="term" value="C:cytoplasm"/>
    <property type="evidence" value="ECO:0007669"/>
    <property type="project" value="TreeGrafter"/>
</dbReference>
<dbReference type="GO" id="GO:0000287">
    <property type="term" value="F:magnesium ion binding"/>
    <property type="evidence" value="ECO:0007669"/>
    <property type="project" value="UniProtKB-UniRule"/>
</dbReference>
<dbReference type="GO" id="GO:0004789">
    <property type="term" value="F:thiamine-phosphate diphosphorylase activity"/>
    <property type="evidence" value="ECO:0007669"/>
    <property type="project" value="UniProtKB-UniRule"/>
</dbReference>
<dbReference type="GO" id="GO:0009228">
    <property type="term" value="P:thiamine biosynthetic process"/>
    <property type="evidence" value="ECO:0007669"/>
    <property type="project" value="UniProtKB-KW"/>
</dbReference>
<dbReference type="GO" id="GO:0009229">
    <property type="term" value="P:thiamine diphosphate biosynthetic process"/>
    <property type="evidence" value="ECO:0007669"/>
    <property type="project" value="UniProtKB-UniRule"/>
</dbReference>
<dbReference type="CDD" id="cd00564">
    <property type="entry name" value="TMP_TenI"/>
    <property type="match status" value="1"/>
</dbReference>
<dbReference type="FunFam" id="3.20.20.70:FF:000178">
    <property type="entry name" value="Thiamine-phosphate synthase"/>
    <property type="match status" value="1"/>
</dbReference>
<dbReference type="Gene3D" id="3.20.20.70">
    <property type="entry name" value="Aldolase class I"/>
    <property type="match status" value="1"/>
</dbReference>
<dbReference type="HAMAP" id="MF_00097">
    <property type="entry name" value="TMP_synthase"/>
    <property type="match status" value="1"/>
</dbReference>
<dbReference type="InterPro" id="IPR013785">
    <property type="entry name" value="Aldolase_TIM"/>
</dbReference>
<dbReference type="InterPro" id="IPR036206">
    <property type="entry name" value="ThiamineP_synth_sf"/>
</dbReference>
<dbReference type="InterPro" id="IPR022998">
    <property type="entry name" value="ThiamineP_synth_TenI"/>
</dbReference>
<dbReference type="InterPro" id="IPR034291">
    <property type="entry name" value="TMP_synthase"/>
</dbReference>
<dbReference type="NCBIfam" id="TIGR00693">
    <property type="entry name" value="thiE"/>
    <property type="match status" value="1"/>
</dbReference>
<dbReference type="PANTHER" id="PTHR20857">
    <property type="entry name" value="THIAMINE-PHOSPHATE PYROPHOSPHORYLASE"/>
    <property type="match status" value="1"/>
</dbReference>
<dbReference type="PANTHER" id="PTHR20857:SF15">
    <property type="entry name" value="THIAMINE-PHOSPHATE SYNTHASE"/>
    <property type="match status" value="1"/>
</dbReference>
<dbReference type="Pfam" id="PF02581">
    <property type="entry name" value="TMP-TENI"/>
    <property type="match status" value="1"/>
</dbReference>
<dbReference type="SUPFAM" id="SSF51391">
    <property type="entry name" value="Thiamin phosphate synthase"/>
    <property type="match status" value="1"/>
</dbReference>
<sequence>MQEPHRQPAICLSTRLAKARLYLCTDARRERGDLAQFVNAALAGGVDIVQLRDKGSVGEQQFGPLEARDALAACEIFTDATGRHDALFAVNDRADIARAAGADVLHLGQGDLPPGVARQIVCRQMLIGLSTHDRHQVAAAVAALDAGLVDYFCVGPCWPTPTKPDRPAPGLELVRAAAELAGDKPWFAIGGIDAQRLPDVLHAGARRIVVVRAITAAADPRAAAEQLISTLTATS</sequence>
<proteinExistence type="inferred from homology"/>
<accession>Q9ZBL5</accession>